<sequence length="731" mass="81729">MSRSEKLTGEHLAPEPAEMARLVAGTHHNPHGILGAHEYDDHTVIRAFRPHAVEVVALVGKDRFSLQHLDSGLFAVALPFVDLIDYRLQVTYEGCEPHTVADAYRFLPTLGEVDLHLFAEGRHERLWEVLGAHPRSFTTADGVVSGVSFAVWAPNAKGVSLIGEFNGWNGHEAPMRVLGPSGVWELFWPDFPCDGLYKFRVHGADGVVTDRADPFAFGTEVPPQTASRVTSSDYTWGDDDWMAGRALRNPVNEAMSTYEVHLGSWRPGLSYRQLARELTDYIVDQGFTHVELLPVAEHPFAGSWGYQVTSYYAPTSRFGTPDDFRALVDALHQAGIGVIVDWVPAHFPKDAWALGRFDGTPLYEHSDPKRGEQLDWGTYVFDFGRPEVRNFLVANALYWLQEFHIDGLRVDAVASMLYLDYSRPEGGWTPNVHGGRENLEAVQFLQEMNATAHKVAPGIVTIAEESTPWSGVTRPTNIGGLGFSMKWNMGWMHDTLDYVSRDPVYRSYHHHEMTFSMLYAFSENYVLPLSHDEVVHGKGTLWGRMPGNNHVKAAGLRSLLAYQWAHPGKQLLFMGQEFGQRAEWSEQRGLDWFQLDENGFSNGIQRLVRDINDIYRCHPALWSLDTTPEGYSWIDANDSANNVLSFMRYGSDGSVLACVFNFAGAEHRDYRLGLPRAGRWREVLNTDATIYHGSGIGNLGGVDATDDPWHGRPASAVLVLPPTSALWLTPA</sequence>
<reference key="1">
    <citation type="journal article" date="2008" name="PLoS ONE">
        <title>Genetic basis of virulence attenuation revealed by comparative genomic analysis of Mycobacterium tuberculosis strain H37Ra versus H37Rv.</title>
        <authorList>
            <person name="Zheng H."/>
            <person name="Lu L."/>
            <person name="Wang B."/>
            <person name="Pu S."/>
            <person name="Zhang X."/>
            <person name="Zhu G."/>
            <person name="Shi W."/>
            <person name="Zhang L."/>
            <person name="Wang H."/>
            <person name="Wang S."/>
            <person name="Zhao G."/>
            <person name="Zhang Y."/>
        </authorList>
    </citation>
    <scope>NUCLEOTIDE SEQUENCE [LARGE SCALE GENOMIC DNA]</scope>
    <source>
        <strain>ATCC 25177 / H37Ra</strain>
    </source>
</reference>
<keyword id="KW-0119">Carbohydrate metabolism</keyword>
<keyword id="KW-0320">Glycogen biosynthesis</keyword>
<keyword id="KW-0321">Glycogen metabolism</keyword>
<keyword id="KW-0328">Glycosyltransferase</keyword>
<keyword id="KW-1185">Reference proteome</keyword>
<keyword id="KW-0808">Transferase</keyword>
<comment type="function">
    <text evidence="1">Catalyzes the formation of the alpha-1,6-glucosidic linkages in glycogen by scission of a 1,4-alpha-linked oligosaccharide from growing alpha-1,4-glucan chains and the subsequent attachment of the oligosaccharide to the alpha-1,6 position.</text>
</comment>
<comment type="catalytic activity">
    <reaction evidence="1">
        <text>Transfers a segment of a (1-&gt;4)-alpha-D-glucan chain to a primary hydroxy group in a similar glucan chain.</text>
        <dbReference type="EC" id="2.4.1.18"/>
    </reaction>
</comment>
<comment type="pathway">
    <text evidence="1">Glycan biosynthesis; glycogen biosynthesis.</text>
</comment>
<comment type="subunit">
    <text evidence="1">Monomer.</text>
</comment>
<comment type="similarity">
    <text evidence="1">Belongs to the glycosyl hydrolase 13 family. GlgB subfamily.</text>
</comment>
<proteinExistence type="inferred from homology"/>
<protein>
    <recommendedName>
        <fullName evidence="1">1,4-alpha-glucan branching enzyme GlgB</fullName>
        <ecNumber evidence="1">2.4.1.18</ecNumber>
    </recommendedName>
    <alternativeName>
        <fullName evidence="1">1,4-alpha-D-glucan:1,4-alpha-D-glucan 6-glucosyl-transferase</fullName>
    </alternativeName>
    <alternativeName>
        <fullName evidence="1">Alpha-(1-&gt;4)-glucan branching enzyme</fullName>
    </alternativeName>
    <alternativeName>
        <fullName evidence="1">Glycogen branching enzyme</fullName>
        <shortName evidence="1">BE</shortName>
    </alternativeName>
</protein>
<gene>
    <name evidence="1" type="primary">glgB</name>
    <name type="ordered locus">MRA_1334</name>
</gene>
<dbReference type="EC" id="2.4.1.18" evidence="1"/>
<dbReference type="EMBL" id="CP000611">
    <property type="protein sequence ID" value="ABQ73076.1"/>
    <property type="molecule type" value="Genomic_DNA"/>
</dbReference>
<dbReference type="RefSeq" id="WP_003900318.1">
    <property type="nucleotide sequence ID" value="NZ_CP016972.1"/>
</dbReference>
<dbReference type="SMR" id="A5U226"/>
<dbReference type="CAZy" id="CBM48">
    <property type="family name" value="Carbohydrate-Binding Module Family 48"/>
</dbReference>
<dbReference type="CAZy" id="GH13">
    <property type="family name" value="Glycoside Hydrolase Family 13"/>
</dbReference>
<dbReference type="KEGG" id="mra:MRA_1334"/>
<dbReference type="eggNOG" id="COG0296">
    <property type="taxonomic scope" value="Bacteria"/>
</dbReference>
<dbReference type="HOGENOM" id="CLU_004245_3_2_11"/>
<dbReference type="UniPathway" id="UPA00164"/>
<dbReference type="Proteomes" id="UP000001988">
    <property type="component" value="Chromosome"/>
</dbReference>
<dbReference type="GO" id="GO:0005829">
    <property type="term" value="C:cytosol"/>
    <property type="evidence" value="ECO:0007669"/>
    <property type="project" value="TreeGrafter"/>
</dbReference>
<dbReference type="GO" id="GO:0003844">
    <property type="term" value="F:1,4-alpha-glucan branching enzyme activity"/>
    <property type="evidence" value="ECO:0007669"/>
    <property type="project" value="UniProtKB-UniRule"/>
</dbReference>
<dbReference type="GO" id="GO:0043169">
    <property type="term" value="F:cation binding"/>
    <property type="evidence" value="ECO:0007669"/>
    <property type="project" value="InterPro"/>
</dbReference>
<dbReference type="GO" id="GO:0004553">
    <property type="term" value="F:hydrolase activity, hydrolyzing O-glycosyl compounds"/>
    <property type="evidence" value="ECO:0007669"/>
    <property type="project" value="InterPro"/>
</dbReference>
<dbReference type="GO" id="GO:0005978">
    <property type="term" value="P:glycogen biosynthetic process"/>
    <property type="evidence" value="ECO:0007669"/>
    <property type="project" value="UniProtKB-UniRule"/>
</dbReference>
<dbReference type="CDD" id="cd11322">
    <property type="entry name" value="AmyAc_Glg_BE"/>
    <property type="match status" value="1"/>
</dbReference>
<dbReference type="CDD" id="cd02855">
    <property type="entry name" value="E_set_GBE_prok_N"/>
    <property type="match status" value="1"/>
</dbReference>
<dbReference type="FunFam" id="2.60.40.10:FF:000169">
    <property type="entry name" value="1,4-alpha-glucan branching enzyme GlgB"/>
    <property type="match status" value="1"/>
</dbReference>
<dbReference type="FunFam" id="2.60.40.10:FF:002204">
    <property type="entry name" value="1,4-alpha-glucan branching enzyme GlgB"/>
    <property type="match status" value="1"/>
</dbReference>
<dbReference type="FunFam" id="2.60.40.1180:FF:000002">
    <property type="entry name" value="1,4-alpha-glucan branching enzyme GlgB"/>
    <property type="match status" value="1"/>
</dbReference>
<dbReference type="FunFam" id="3.20.20.80:FF:000003">
    <property type="entry name" value="1,4-alpha-glucan branching enzyme GlgB"/>
    <property type="match status" value="1"/>
</dbReference>
<dbReference type="Gene3D" id="3.20.20.80">
    <property type="entry name" value="Glycosidases"/>
    <property type="match status" value="1"/>
</dbReference>
<dbReference type="Gene3D" id="2.60.40.1180">
    <property type="entry name" value="Golgi alpha-mannosidase II"/>
    <property type="match status" value="1"/>
</dbReference>
<dbReference type="Gene3D" id="2.60.40.10">
    <property type="entry name" value="Immunoglobulins"/>
    <property type="match status" value="2"/>
</dbReference>
<dbReference type="HAMAP" id="MF_00685">
    <property type="entry name" value="GlgB"/>
    <property type="match status" value="1"/>
</dbReference>
<dbReference type="InterPro" id="IPR006048">
    <property type="entry name" value="A-amylase/branching_C"/>
</dbReference>
<dbReference type="InterPro" id="IPR037439">
    <property type="entry name" value="Branching_enzy"/>
</dbReference>
<dbReference type="InterPro" id="IPR006407">
    <property type="entry name" value="GlgB"/>
</dbReference>
<dbReference type="InterPro" id="IPR054169">
    <property type="entry name" value="GlgB_N"/>
</dbReference>
<dbReference type="InterPro" id="IPR044143">
    <property type="entry name" value="GlgB_N_E_set_prok"/>
</dbReference>
<dbReference type="InterPro" id="IPR006047">
    <property type="entry name" value="Glyco_hydro_13_cat_dom"/>
</dbReference>
<dbReference type="InterPro" id="IPR004193">
    <property type="entry name" value="Glyco_hydro_13_N"/>
</dbReference>
<dbReference type="InterPro" id="IPR013780">
    <property type="entry name" value="Glyco_hydro_b"/>
</dbReference>
<dbReference type="InterPro" id="IPR017853">
    <property type="entry name" value="Glycoside_hydrolase_SF"/>
</dbReference>
<dbReference type="InterPro" id="IPR013783">
    <property type="entry name" value="Ig-like_fold"/>
</dbReference>
<dbReference type="InterPro" id="IPR014756">
    <property type="entry name" value="Ig_E-set"/>
</dbReference>
<dbReference type="NCBIfam" id="TIGR01515">
    <property type="entry name" value="branching_enzym"/>
    <property type="match status" value="1"/>
</dbReference>
<dbReference type="NCBIfam" id="NF003811">
    <property type="entry name" value="PRK05402.1"/>
    <property type="match status" value="1"/>
</dbReference>
<dbReference type="NCBIfam" id="NF008967">
    <property type="entry name" value="PRK12313.1"/>
    <property type="match status" value="1"/>
</dbReference>
<dbReference type="PANTHER" id="PTHR43651">
    <property type="entry name" value="1,4-ALPHA-GLUCAN-BRANCHING ENZYME"/>
    <property type="match status" value="1"/>
</dbReference>
<dbReference type="PANTHER" id="PTHR43651:SF3">
    <property type="entry name" value="1,4-ALPHA-GLUCAN-BRANCHING ENZYME"/>
    <property type="match status" value="1"/>
</dbReference>
<dbReference type="Pfam" id="PF00128">
    <property type="entry name" value="Alpha-amylase"/>
    <property type="match status" value="2"/>
</dbReference>
<dbReference type="Pfam" id="PF02806">
    <property type="entry name" value="Alpha-amylase_C"/>
    <property type="match status" value="1"/>
</dbReference>
<dbReference type="Pfam" id="PF02922">
    <property type="entry name" value="CBM_48"/>
    <property type="match status" value="1"/>
</dbReference>
<dbReference type="Pfam" id="PF22019">
    <property type="entry name" value="GlgB_N"/>
    <property type="match status" value="1"/>
</dbReference>
<dbReference type="PIRSF" id="PIRSF000463">
    <property type="entry name" value="GlgB"/>
    <property type="match status" value="1"/>
</dbReference>
<dbReference type="SMART" id="SM00642">
    <property type="entry name" value="Aamy"/>
    <property type="match status" value="1"/>
</dbReference>
<dbReference type="SUPFAM" id="SSF51445">
    <property type="entry name" value="(Trans)glycosidases"/>
    <property type="match status" value="1"/>
</dbReference>
<dbReference type="SUPFAM" id="SSF81296">
    <property type="entry name" value="E set domains"/>
    <property type="match status" value="2"/>
</dbReference>
<dbReference type="SUPFAM" id="SSF51011">
    <property type="entry name" value="Glycosyl hydrolase domain"/>
    <property type="match status" value="1"/>
</dbReference>
<feature type="chain" id="PRO_1000044985" description="1,4-alpha-glucan branching enzyme GlgB">
    <location>
        <begin position="1"/>
        <end position="731"/>
    </location>
</feature>
<feature type="active site" description="Nucleophile" evidence="1">
    <location>
        <position position="411"/>
    </location>
</feature>
<feature type="active site" description="Proton donor" evidence="1">
    <location>
        <position position="464"/>
    </location>
</feature>
<evidence type="ECO:0000255" key="1">
    <source>
        <dbReference type="HAMAP-Rule" id="MF_00685"/>
    </source>
</evidence>
<organism>
    <name type="scientific">Mycobacterium tuberculosis (strain ATCC 25177 / H37Ra)</name>
    <dbReference type="NCBI Taxonomy" id="419947"/>
    <lineage>
        <taxon>Bacteria</taxon>
        <taxon>Bacillati</taxon>
        <taxon>Actinomycetota</taxon>
        <taxon>Actinomycetes</taxon>
        <taxon>Mycobacteriales</taxon>
        <taxon>Mycobacteriaceae</taxon>
        <taxon>Mycobacterium</taxon>
        <taxon>Mycobacterium tuberculosis complex</taxon>
    </lineage>
</organism>
<accession>A5U226</accession>
<name>GLGB_MYCTA</name>